<sequence length="445" mass="48769">MKLFGTDGVRGKAGEFLDSFLAMRLAMAAGIYFKDKSITNNILVGKDTRRSGYMIENAIVSGLTSIGYNVIQIGPMPTPAIAFLTEDMRCDAGIMISASHNPYYDNGIKFFDAHGNKLSEDIEKKIEEIYFDDKLIQASKVDMEKIGQAKRIDDVIGRYIVSIKNSFPKDLTLKSLRVVLDVAHGAAYKVAPTVFKELGAEVIVMSDKPNGLNINENCGALHPANLAAEVKRLRADVGFAFDGDADRLVVVDEKGEVANGDSLLGVLALYLKEQGKLQSSVVATIMSNGALKEFLNKHGIELDTCNVGDKYVLEKLKANGGNFGGEQSGHIIFSDYAKTGDGLIAALQFSALMLSKKKSASSILGQVKPYPQLLTNLKIAEKKDLDKIKGLKELKKDLENKNINTLFRYSGTENLIRLLLEAKDIKLLEKEMKNVVEFFKKALNG</sequence>
<keyword id="KW-0413">Isomerase</keyword>
<keyword id="KW-0460">Magnesium</keyword>
<keyword id="KW-0479">Metal-binding</keyword>
<keyword id="KW-0597">Phosphoprotein</keyword>
<feature type="chain" id="PRO_0000305635" description="Phosphoglucosamine mutase">
    <location>
        <begin position="1"/>
        <end position="445"/>
    </location>
</feature>
<feature type="active site" description="Phosphoserine intermediate" evidence="1">
    <location>
        <position position="99"/>
    </location>
</feature>
<feature type="binding site" description="via phosphate group" evidence="1">
    <location>
        <position position="99"/>
    </location>
    <ligand>
        <name>Mg(2+)</name>
        <dbReference type="ChEBI" id="CHEBI:18420"/>
    </ligand>
</feature>
<feature type="binding site" evidence="1">
    <location>
        <position position="242"/>
    </location>
    <ligand>
        <name>Mg(2+)</name>
        <dbReference type="ChEBI" id="CHEBI:18420"/>
    </ligand>
</feature>
<feature type="binding site" evidence="1">
    <location>
        <position position="244"/>
    </location>
    <ligand>
        <name>Mg(2+)</name>
        <dbReference type="ChEBI" id="CHEBI:18420"/>
    </ligand>
</feature>
<feature type="binding site" evidence="1">
    <location>
        <position position="246"/>
    </location>
    <ligand>
        <name>Mg(2+)</name>
        <dbReference type="ChEBI" id="CHEBI:18420"/>
    </ligand>
</feature>
<feature type="modified residue" description="Phosphoserine" evidence="1">
    <location>
        <position position="99"/>
    </location>
</feature>
<comment type="function">
    <text evidence="1">Catalyzes the conversion of glucosamine-6-phosphate to glucosamine-1-phosphate.</text>
</comment>
<comment type="catalytic activity">
    <reaction evidence="1">
        <text>alpha-D-glucosamine 1-phosphate = D-glucosamine 6-phosphate</text>
        <dbReference type="Rhea" id="RHEA:23424"/>
        <dbReference type="ChEBI" id="CHEBI:58516"/>
        <dbReference type="ChEBI" id="CHEBI:58725"/>
        <dbReference type="EC" id="5.4.2.10"/>
    </reaction>
</comment>
<comment type="cofactor">
    <cofactor evidence="1">
        <name>Mg(2+)</name>
        <dbReference type="ChEBI" id="CHEBI:18420"/>
    </cofactor>
    <text evidence="1">Binds 1 Mg(2+) ion per subunit.</text>
</comment>
<comment type="PTM">
    <text evidence="1">Activated by phosphorylation.</text>
</comment>
<comment type="similarity">
    <text evidence="1">Belongs to the phosphohexose mutase family.</text>
</comment>
<comment type="sequence caution" evidence="2">
    <conflict type="erroneous initiation">
        <sequence resource="EMBL-CDS" id="EAQ73397"/>
    </conflict>
</comment>
<name>GLMM_CAMJJ</name>
<organism>
    <name type="scientific">Campylobacter jejuni subsp. jejuni serotype O:23/36 (strain 81-176)</name>
    <dbReference type="NCBI Taxonomy" id="354242"/>
    <lineage>
        <taxon>Bacteria</taxon>
        <taxon>Pseudomonadati</taxon>
        <taxon>Campylobacterota</taxon>
        <taxon>Epsilonproteobacteria</taxon>
        <taxon>Campylobacterales</taxon>
        <taxon>Campylobacteraceae</taxon>
        <taxon>Campylobacter</taxon>
    </lineage>
</organism>
<gene>
    <name evidence="1" type="primary">glmM</name>
    <name type="ordered locus">CJJ81176_0383</name>
</gene>
<evidence type="ECO:0000255" key="1">
    <source>
        <dbReference type="HAMAP-Rule" id="MF_01554"/>
    </source>
</evidence>
<evidence type="ECO:0000305" key="2"/>
<proteinExistence type="inferred from homology"/>
<protein>
    <recommendedName>
        <fullName evidence="1">Phosphoglucosamine mutase</fullName>
        <ecNumber evidence="1">5.4.2.10</ecNumber>
    </recommendedName>
</protein>
<reference key="1">
    <citation type="submission" date="2006-12" db="EMBL/GenBank/DDBJ databases">
        <authorList>
            <person name="Fouts D.E."/>
            <person name="Nelson K.E."/>
            <person name="Sebastian Y."/>
        </authorList>
    </citation>
    <scope>NUCLEOTIDE SEQUENCE [LARGE SCALE GENOMIC DNA]</scope>
    <source>
        <strain>81-176</strain>
    </source>
</reference>
<dbReference type="EC" id="5.4.2.10" evidence="1"/>
<dbReference type="EMBL" id="CP000538">
    <property type="protein sequence ID" value="EAQ73397.2"/>
    <property type="status" value="ALT_INIT"/>
    <property type="molecule type" value="Genomic_DNA"/>
</dbReference>
<dbReference type="RefSeq" id="WP_002857318.1">
    <property type="nucleotide sequence ID" value="NC_008787.1"/>
</dbReference>
<dbReference type="SMR" id="A1VY80"/>
<dbReference type="KEGG" id="cjj:CJJ81176_0383"/>
<dbReference type="eggNOG" id="COG1109">
    <property type="taxonomic scope" value="Bacteria"/>
</dbReference>
<dbReference type="HOGENOM" id="CLU_016950_7_0_7"/>
<dbReference type="Proteomes" id="UP000000646">
    <property type="component" value="Chromosome"/>
</dbReference>
<dbReference type="GO" id="GO:0005829">
    <property type="term" value="C:cytosol"/>
    <property type="evidence" value="ECO:0007669"/>
    <property type="project" value="TreeGrafter"/>
</dbReference>
<dbReference type="GO" id="GO:0000287">
    <property type="term" value="F:magnesium ion binding"/>
    <property type="evidence" value="ECO:0007669"/>
    <property type="project" value="UniProtKB-UniRule"/>
</dbReference>
<dbReference type="GO" id="GO:0008966">
    <property type="term" value="F:phosphoglucosamine mutase activity"/>
    <property type="evidence" value="ECO:0007669"/>
    <property type="project" value="UniProtKB-UniRule"/>
</dbReference>
<dbReference type="GO" id="GO:0004615">
    <property type="term" value="F:phosphomannomutase activity"/>
    <property type="evidence" value="ECO:0007669"/>
    <property type="project" value="TreeGrafter"/>
</dbReference>
<dbReference type="GO" id="GO:0005975">
    <property type="term" value="P:carbohydrate metabolic process"/>
    <property type="evidence" value="ECO:0007669"/>
    <property type="project" value="InterPro"/>
</dbReference>
<dbReference type="GO" id="GO:0009252">
    <property type="term" value="P:peptidoglycan biosynthetic process"/>
    <property type="evidence" value="ECO:0007669"/>
    <property type="project" value="TreeGrafter"/>
</dbReference>
<dbReference type="GO" id="GO:0006048">
    <property type="term" value="P:UDP-N-acetylglucosamine biosynthetic process"/>
    <property type="evidence" value="ECO:0007669"/>
    <property type="project" value="TreeGrafter"/>
</dbReference>
<dbReference type="CDD" id="cd05802">
    <property type="entry name" value="GlmM"/>
    <property type="match status" value="1"/>
</dbReference>
<dbReference type="FunFam" id="3.40.120.10:FF:000001">
    <property type="entry name" value="Phosphoglucosamine mutase"/>
    <property type="match status" value="1"/>
</dbReference>
<dbReference type="FunFam" id="3.40.120.10:FF:000003">
    <property type="entry name" value="Phosphoglucosamine mutase"/>
    <property type="match status" value="1"/>
</dbReference>
<dbReference type="Gene3D" id="3.40.120.10">
    <property type="entry name" value="Alpha-D-Glucose-1,6-Bisphosphate, subunit A, domain 3"/>
    <property type="match status" value="3"/>
</dbReference>
<dbReference type="Gene3D" id="3.30.310.50">
    <property type="entry name" value="Alpha-D-phosphohexomutase, C-terminal domain"/>
    <property type="match status" value="1"/>
</dbReference>
<dbReference type="HAMAP" id="MF_01554_B">
    <property type="entry name" value="GlmM_B"/>
    <property type="match status" value="1"/>
</dbReference>
<dbReference type="InterPro" id="IPR005844">
    <property type="entry name" value="A-D-PHexomutase_a/b/a-I"/>
</dbReference>
<dbReference type="InterPro" id="IPR016055">
    <property type="entry name" value="A-D-PHexomutase_a/b/a-I/II/III"/>
</dbReference>
<dbReference type="InterPro" id="IPR005845">
    <property type="entry name" value="A-D-PHexomutase_a/b/a-II"/>
</dbReference>
<dbReference type="InterPro" id="IPR005846">
    <property type="entry name" value="A-D-PHexomutase_a/b/a-III"/>
</dbReference>
<dbReference type="InterPro" id="IPR005843">
    <property type="entry name" value="A-D-PHexomutase_C"/>
</dbReference>
<dbReference type="InterPro" id="IPR036900">
    <property type="entry name" value="A-D-PHexomutase_C_sf"/>
</dbReference>
<dbReference type="InterPro" id="IPR016066">
    <property type="entry name" value="A-D-PHexomutase_CS"/>
</dbReference>
<dbReference type="InterPro" id="IPR005841">
    <property type="entry name" value="Alpha-D-phosphohexomutase_SF"/>
</dbReference>
<dbReference type="InterPro" id="IPR006352">
    <property type="entry name" value="GlmM_bact"/>
</dbReference>
<dbReference type="InterPro" id="IPR050060">
    <property type="entry name" value="Phosphoglucosamine_mutase"/>
</dbReference>
<dbReference type="NCBIfam" id="TIGR01455">
    <property type="entry name" value="glmM"/>
    <property type="match status" value="1"/>
</dbReference>
<dbReference type="NCBIfam" id="NF008139">
    <property type="entry name" value="PRK10887.1"/>
    <property type="match status" value="1"/>
</dbReference>
<dbReference type="PANTHER" id="PTHR42946:SF1">
    <property type="entry name" value="PHOSPHOGLUCOMUTASE (ALPHA-D-GLUCOSE-1,6-BISPHOSPHATE-DEPENDENT)"/>
    <property type="match status" value="1"/>
</dbReference>
<dbReference type="PANTHER" id="PTHR42946">
    <property type="entry name" value="PHOSPHOHEXOSE MUTASE"/>
    <property type="match status" value="1"/>
</dbReference>
<dbReference type="Pfam" id="PF02878">
    <property type="entry name" value="PGM_PMM_I"/>
    <property type="match status" value="1"/>
</dbReference>
<dbReference type="Pfam" id="PF02879">
    <property type="entry name" value="PGM_PMM_II"/>
    <property type="match status" value="1"/>
</dbReference>
<dbReference type="Pfam" id="PF02880">
    <property type="entry name" value="PGM_PMM_III"/>
    <property type="match status" value="1"/>
</dbReference>
<dbReference type="Pfam" id="PF00408">
    <property type="entry name" value="PGM_PMM_IV"/>
    <property type="match status" value="1"/>
</dbReference>
<dbReference type="PRINTS" id="PR00509">
    <property type="entry name" value="PGMPMM"/>
</dbReference>
<dbReference type="SUPFAM" id="SSF55957">
    <property type="entry name" value="Phosphoglucomutase, C-terminal domain"/>
    <property type="match status" value="1"/>
</dbReference>
<dbReference type="SUPFAM" id="SSF53738">
    <property type="entry name" value="Phosphoglucomutase, first 3 domains"/>
    <property type="match status" value="3"/>
</dbReference>
<dbReference type="PROSITE" id="PS00710">
    <property type="entry name" value="PGM_PMM"/>
    <property type="match status" value="1"/>
</dbReference>
<accession>A1VY80</accession>